<sequence>MKFMVEVRIRLKKGMLNPEAATIERALALLGYEVEDTDTTDVITFTMDEDSLEAVEREVEDMCQRLLCNPVIHDYDVSINEMEG</sequence>
<dbReference type="EC" id="6.3.5.3" evidence="2"/>
<dbReference type="EMBL" id="AE000666">
    <property type="protein sequence ID" value="AAB84675.1"/>
    <property type="molecule type" value="Genomic_DNA"/>
</dbReference>
<dbReference type="PIR" id="H69092">
    <property type="entry name" value="H69092"/>
</dbReference>
<dbReference type="RefSeq" id="WP_010875808.1">
    <property type="nucleotide sequence ID" value="NC_000916.1"/>
</dbReference>
<dbReference type="PDB" id="1GTD">
    <property type="method" value="X-ray"/>
    <property type="resolution" value="2.56 A"/>
    <property type="chains" value="A/B=1-81"/>
</dbReference>
<dbReference type="PDBsum" id="1GTD"/>
<dbReference type="SMR" id="O26271"/>
<dbReference type="FunCoup" id="O26271">
    <property type="interactions" value="7"/>
</dbReference>
<dbReference type="STRING" id="187420.MTH_169"/>
<dbReference type="PaxDb" id="187420-MTH_169"/>
<dbReference type="EnsemblBacteria" id="AAB84675">
    <property type="protein sequence ID" value="AAB84675"/>
    <property type="gene ID" value="MTH_169"/>
</dbReference>
<dbReference type="GeneID" id="82296648"/>
<dbReference type="KEGG" id="mth:MTH_169"/>
<dbReference type="PATRIC" id="fig|187420.15.peg.142"/>
<dbReference type="HOGENOM" id="CLU_164833_3_0_2"/>
<dbReference type="InParanoid" id="O26271"/>
<dbReference type="UniPathway" id="UPA00074">
    <property type="reaction ID" value="UER00128"/>
</dbReference>
<dbReference type="EvolutionaryTrace" id="O26271"/>
<dbReference type="Proteomes" id="UP000005223">
    <property type="component" value="Chromosome"/>
</dbReference>
<dbReference type="GO" id="GO:0005737">
    <property type="term" value="C:cytoplasm"/>
    <property type="evidence" value="ECO:0007669"/>
    <property type="project" value="UniProtKB-SubCell"/>
</dbReference>
<dbReference type="GO" id="GO:0005524">
    <property type="term" value="F:ATP binding"/>
    <property type="evidence" value="ECO:0007669"/>
    <property type="project" value="UniProtKB-UniRule"/>
</dbReference>
<dbReference type="GO" id="GO:0004642">
    <property type="term" value="F:phosphoribosylformylglycinamidine synthase activity"/>
    <property type="evidence" value="ECO:0007669"/>
    <property type="project" value="UniProtKB-UniRule"/>
</dbReference>
<dbReference type="GO" id="GO:0006189">
    <property type="term" value="P:'de novo' IMP biosynthetic process"/>
    <property type="evidence" value="ECO:0007669"/>
    <property type="project" value="UniProtKB-UniRule"/>
</dbReference>
<dbReference type="Gene3D" id="3.30.1280.10">
    <property type="entry name" value="Phosphoribosylformylglycinamidine synthase subunit PurS"/>
    <property type="match status" value="1"/>
</dbReference>
<dbReference type="HAMAP" id="MF_01926">
    <property type="entry name" value="PurS"/>
    <property type="match status" value="1"/>
</dbReference>
<dbReference type="InterPro" id="IPR003850">
    <property type="entry name" value="PurS"/>
</dbReference>
<dbReference type="InterPro" id="IPR036604">
    <property type="entry name" value="PurS-like_sf"/>
</dbReference>
<dbReference type="NCBIfam" id="TIGR00302">
    <property type="entry name" value="phosphoribosylformylglycinamidine synthase subunit PurS"/>
    <property type="match status" value="1"/>
</dbReference>
<dbReference type="NCBIfam" id="NF004630">
    <property type="entry name" value="PRK05974.1"/>
    <property type="match status" value="1"/>
</dbReference>
<dbReference type="PANTHER" id="PTHR34696">
    <property type="entry name" value="PHOSPHORIBOSYLFORMYLGLYCINAMIDINE SYNTHASE SUBUNIT PURS"/>
    <property type="match status" value="1"/>
</dbReference>
<dbReference type="PANTHER" id="PTHR34696:SF1">
    <property type="entry name" value="PHOSPHORIBOSYLFORMYLGLYCINAMIDINE SYNTHASE SUBUNIT PURS"/>
    <property type="match status" value="1"/>
</dbReference>
<dbReference type="Pfam" id="PF02700">
    <property type="entry name" value="PurS"/>
    <property type="match status" value="1"/>
</dbReference>
<dbReference type="SUPFAM" id="SSF82697">
    <property type="entry name" value="PurS-like"/>
    <property type="match status" value="1"/>
</dbReference>
<organism>
    <name type="scientific">Methanothermobacter thermautotrophicus (strain ATCC 29096 / DSM 1053 / JCM 10044 / NBRC 100330 / Delta H)</name>
    <name type="common">Methanobacterium thermoautotrophicum</name>
    <dbReference type="NCBI Taxonomy" id="187420"/>
    <lineage>
        <taxon>Archaea</taxon>
        <taxon>Methanobacteriati</taxon>
        <taxon>Methanobacteriota</taxon>
        <taxon>Methanomada group</taxon>
        <taxon>Methanobacteria</taxon>
        <taxon>Methanobacteriales</taxon>
        <taxon>Methanobacteriaceae</taxon>
        <taxon>Methanothermobacter</taxon>
    </lineage>
</organism>
<evidence type="ECO:0000250" key="1"/>
<evidence type="ECO:0000255" key="2">
    <source>
        <dbReference type="HAMAP-Rule" id="MF_01926"/>
    </source>
</evidence>
<evidence type="ECO:0007829" key="3">
    <source>
        <dbReference type="PDB" id="1GTD"/>
    </source>
</evidence>
<accession>O26271</accession>
<protein>
    <recommendedName>
        <fullName evidence="2">Phosphoribosylformylglycinamidine synthase subunit PurS</fullName>
        <shortName evidence="2">FGAM synthase</shortName>
        <ecNumber evidence="2">6.3.5.3</ecNumber>
    </recommendedName>
    <alternativeName>
        <fullName evidence="2">Formylglycinamide ribonucleotide amidotransferase subunit III</fullName>
        <shortName evidence="2">FGAR amidotransferase III</shortName>
        <shortName evidence="2">FGAR-AT III</shortName>
    </alternativeName>
    <alternativeName>
        <fullName evidence="2">Phosphoribosylformylglycinamidine synthase subunit III</fullName>
    </alternativeName>
</protein>
<gene>
    <name evidence="2" type="primary">purS</name>
    <name type="ordered locus">MTH_169</name>
</gene>
<keyword id="KW-0002">3D-structure</keyword>
<keyword id="KW-0067">ATP-binding</keyword>
<keyword id="KW-0963">Cytoplasm</keyword>
<keyword id="KW-0436">Ligase</keyword>
<keyword id="KW-0547">Nucleotide-binding</keyword>
<keyword id="KW-0658">Purine biosynthesis</keyword>
<keyword id="KW-1185">Reference proteome</keyword>
<feature type="chain" id="PRO_0000100400" description="Phosphoribosylformylglycinamidine synthase subunit PurS">
    <location>
        <begin position="1"/>
        <end position="84"/>
    </location>
</feature>
<feature type="strand" evidence="3">
    <location>
        <begin position="3"/>
        <end position="11"/>
    </location>
</feature>
<feature type="helix" evidence="3">
    <location>
        <begin position="18"/>
        <end position="30"/>
    </location>
</feature>
<feature type="strand" evidence="3">
    <location>
        <begin position="35"/>
        <end position="47"/>
    </location>
</feature>
<feature type="helix" evidence="3">
    <location>
        <begin position="52"/>
        <end position="65"/>
    </location>
</feature>
<feature type="turn" evidence="3">
    <location>
        <begin position="70"/>
        <end position="72"/>
    </location>
</feature>
<feature type="strand" evidence="3">
    <location>
        <begin position="73"/>
        <end position="81"/>
    </location>
</feature>
<reference key="1">
    <citation type="journal article" date="1997" name="J. Bacteriol.">
        <title>Complete genome sequence of Methanobacterium thermoautotrophicum deltaH: functional analysis and comparative genomics.</title>
        <authorList>
            <person name="Smith D.R."/>
            <person name="Doucette-Stamm L.A."/>
            <person name="Deloughery C."/>
            <person name="Lee H.-M."/>
            <person name="Dubois J."/>
            <person name="Aldredge T."/>
            <person name="Bashirzadeh R."/>
            <person name="Blakely D."/>
            <person name="Cook R."/>
            <person name="Gilbert K."/>
            <person name="Harrison D."/>
            <person name="Hoang L."/>
            <person name="Keagle P."/>
            <person name="Lumm W."/>
            <person name="Pothier B."/>
            <person name="Qiu D."/>
            <person name="Spadafora R."/>
            <person name="Vicare R."/>
            <person name="Wang Y."/>
            <person name="Wierzbowski J."/>
            <person name="Gibson R."/>
            <person name="Jiwani N."/>
            <person name="Caruso A."/>
            <person name="Bush D."/>
            <person name="Safer H."/>
            <person name="Patwell D."/>
            <person name="Prabhakar S."/>
            <person name="McDougall S."/>
            <person name="Shimer G."/>
            <person name="Goyal A."/>
            <person name="Pietrovski S."/>
            <person name="Church G.M."/>
            <person name="Daniels C.J."/>
            <person name="Mao J.-I."/>
            <person name="Rice P."/>
            <person name="Noelling J."/>
            <person name="Reeve J.N."/>
        </authorList>
    </citation>
    <scope>NUCLEOTIDE SEQUENCE [LARGE SCALE GENOMIC DNA]</scope>
    <source>
        <strain>ATCC 29096 / DSM 1053 / JCM 10044 / NBRC 100330 / Delta H</strain>
    </source>
</reference>
<reference key="2">
    <citation type="journal article" date="2002" name="Proteins">
        <title>Crystal structure of MTH169, a crucial component of phosphoribosylformylglycinamidine synthetase.</title>
        <authorList>
            <person name="Batra R."/>
            <person name="Christendat D."/>
            <person name="Edwards A."/>
            <person name="Arrowsmith C."/>
            <person name="Tong L."/>
        </authorList>
    </citation>
    <scope>X-RAY CRYSTALLOGRAPHY (2.56 ANGSTROMS) OF 1-81</scope>
</reference>
<name>PURS_METTH</name>
<proteinExistence type="evidence at protein level"/>
<comment type="function">
    <text evidence="2">Part of the phosphoribosylformylglycinamidine synthase complex involved in the purines biosynthetic pathway. Catalyzes the ATP-dependent conversion of formylglycinamide ribonucleotide (FGAR) and glutamine to yield formylglycinamidine ribonucleotide (FGAM) and glutamate. The FGAM synthase complex is composed of three subunits. PurQ produces an ammonia molecule by converting glutamine to glutamate. PurL transfers the ammonia molecule to FGAR to form FGAM in an ATP-dependent manner. PurS interacts with PurQ and PurL and is thought to assist in the transfer of the ammonia molecule from PurQ to PurL.</text>
</comment>
<comment type="catalytic activity">
    <reaction evidence="2">
        <text>N(2)-formyl-N(1)-(5-phospho-beta-D-ribosyl)glycinamide + L-glutamine + ATP + H2O = 2-formamido-N(1)-(5-O-phospho-beta-D-ribosyl)acetamidine + L-glutamate + ADP + phosphate + H(+)</text>
        <dbReference type="Rhea" id="RHEA:17129"/>
        <dbReference type="ChEBI" id="CHEBI:15377"/>
        <dbReference type="ChEBI" id="CHEBI:15378"/>
        <dbReference type="ChEBI" id="CHEBI:29985"/>
        <dbReference type="ChEBI" id="CHEBI:30616"/>
        <dbReference type="ChEBI" id="CHEBI:43474"/>
        <dbReference type="ChEBI" id="CHEBI:58359"/>
        <dbReference type="ChEBI" id="CHEBI:147286"/>
        <dbReference type="ChEBI" id="CHEBI:147287"/>
        <dbReference type="ChEBI" id="CHEBI:456216"/>
        <dbReference type="EC" id="6.3.5.3"/>
    </reaction>
</comment>
<comment type="pathway">
    <text evidence="2">Purine metabolism; IMP biosynthesis via de novo pathway; 5-amino-1-(5-phospho-D-ribosyl)imidazole from N(2)-formyl-N(1)-(5-phospho-D-ribosyl)glycinamide: step 1/2.</text>
</comment>
<comment type="subunit">
    <text evidence="1">Homodimer. Part of the FGAM synthase complex composed of 1 PurL, 1 PurQ and 2 PurS subunits (By similarity).</text>
</comment>
<comment type="subcellular location">
    <subcellularLocation>
        <location evidence="2">Cytoplasm</location>
    </subcellularLocation>
</comment>
<comment type="similarity">
    <text evidence="2">Belongs to the PurS family.</text>
</comment>